<keyword id="KW-0025">Alternative splicing</keyword>
<keyword id="KW-0238">DNA-binding</keyword>
<keyword id="KW-0479">Metal-binding</keyword>
<keyword id="KW-0539">Nucleus</keyword>
<keyword id="KW-1185">Reference proteome</keyword>
<keyword id="KW-0677">Repeat</keyword>
<keyword id="KW-0804">Transcription</keyword>
<keyword id="KW-0805">Transcription regulation</keyword>
<keyword id="KW-0862">Zinc</keyword>
<feature type="chain" id="PRO_0000133685" description="WRKY transcription factor 44">
    <location>
        <begin position="1"/>
        <end position="429"/>
    </location>
</feature>
<feature type="DNA-binding region" description="WRKY 1" evidence="2">
    <location>
        <begin position="159"/>
        <end position="223"/>
    </location>
</feature>
<feature type="DNA-binding region" description="WRKY 2" evidence="2">
    <location>
        <begin position="343"/>
        <end position="408"/>
    </location>
</feature>
<feature type="region of interest" description="Disordered" evidence="3">
    <location>
        <begin position="214"/>
        <end position="279"/>
    </location>
</feature>
<feature type="region of interest" description="Disordered" evidence="3">
    <location>
        <begin position="292"/>
        <end position="348"/>
    </location>
</feature>
<feature type="region of interest" description="Disordered" evidence="3">
    <location>
        <begin position="410"/>
        <end position="429"/>
    </location>
</feature>
<feature type="compositionally biased region" description="Polar residues" evidence="3">
    <location>
        <begin position="254"/>
        <end position="275"/>
    </location>
</feature>
<feature type="compositionally biased region" description="Polar residues" evidence="3">
    <location>
        <begin position="295"/>
        <end position="313"/>
    </location>
</feature>
<feature type="compositionally biased region" description="Polar residues" evidence="3">
    <location>
        <begin position="334"/>
        <end position="345"/>
    </location>
</feature>
<feature type="compositionally biased region" description="Low complexity" evidence="3">
    <location>
        <begin position="410"/>
        <end position="422"/>
    </location>
</feature>
<feature type="binding site" evidence="1">
    <location>
        <position position="190"/>
    </location>
    <ligand>
        <name>Zn(2+)</name>
        <dbReference type="ChEBI" id="CHEBI:29105"/>
    </ligand>
</feature>
<feature type="binding site" evidence="1">
    <location>
        <position position="195"/>
    </location>
    <ligand>
        <name>Zn(2+)</name>
        <dbReference type="ChEBI" id="CHEBI:29105"/>
    </ligand>
</feature>
<feature type="binding site" evidence="1">
    <location>
        <position position="218"/>
    </location>
    <ligand>
        <name>Zn(2+)</name>
        <dbReference type="ChEBI" id="CHEBI:29105"/>
    </ligand>
</feature>
<feature type="binding site" evidence="1">
    <location>
        <position position="220"/>
    </location>
    <ligand>
        <name>Zn(2+)</name>
        <dbReference type="ChEBI" id="CHEBI:29105"/>
    </ligand>
</feature>
<feature type="binding site" evidence="1">
    <location>
        <position position="374"/>
    </location>
    <ligand>
        <name>Zn(2+)</name>
        <dbReference type="ChEBI" id="CHEBI:29105"/>
    </ligand>
</feature>
<feature type="binding site" evidence="1">
    <location>
        <position position="379"/>
    </location>
    <ligand>
        <name>Zn(2+)</name>
        <dbReference type="ChEBI" id="CHEBI:29105"/>
    </ligand>
</feature>
<feature type="binding site" evidence="1">
    <location>
        <position position="403"/>
    </location>
    <ligand>
        <name>Zn(2+)</name>
        <dbReference type="ChEBI" id="CHEBI:29105"/>
    </ligand>
</feature>
<feature type="binding site" evidence="1">
    <location>
        <position position="405"/>
    </location>
    <ligand>
        <name>Zn(2+)</name>
        <dbReference type="ChEBI" id="CHEBI:29105"/>
    </ligand>
</feature>
<feature type="mutagenesis site" description="In ttg2-2; defects in trichome development, seed coat color and mucilage production.">
    <original>TYEGKHNHHLLLSPPSSSTLPFNSPQLSKQTI</original>
    <variation>SLQPTRVNIIIICS</variation>
    <location>
        <begin position="398"/>
        <end position="429"/>
    </location>
</feature>
<feature type="sequence conflict" description="In Ref. 3; AAM61951." evidence="5" ref="3">
    <original>L</original>
    <variation>F</variation>
    <location>
        <position position="417"/>
    </location>
</feature>
<evidence type="ECO:0000250" key="1">
    <source>
        <dbReference type="UniProtKB" id="Q9SI37"/>
    </source>
</evidence>
<evidence type="ECO:0000255" key="2">
    <source>
        <dbReference type="PROSITE-ProRule" id="PRU00223"/>
    </source>
</evidence>
<evidence type="ECO:0000256" key="3">
    <source>
        <dbReference type="SAM" id="MobiDB-lite"/>
    </source>
</evidence>
<evidence type="ECO:0000269" key="4">
    <source>
    </source>
</evidence>
<evidence type="ECO:0000305" key="5"/>
<reference key="1">
    <citation type="journal article" date="1999" name="Nature">
        <title>Sequence and analysis of chromosome 2 of the plant Arabidopsis thaliana.</title>
        <authorList>
            <person name="Lin X."/>
            <person name="Kaul S."/>
            <person name="Rounsley S.D."/>
            <person name="Shea T.P."/>
            <person name="Benito M.-I."/>
            <person name="Town C.D."/>
            <person name="Fujii C.Y."/>
            <person name="Mason T.M."/>
            <person name="Bowman C.L."/>
            <person name="Barnstead M.E."/>
            <person name="Feldblyum T.V."/>
            <person name="Buell C.R."/>
            <person name="Ketchum K.A."/>
            <person name="Lee J.J."/>
            <person name="Ronning C.M."/>
            <person name="Koo H.L."/>
            <person name="Moffat K.S."/>
            <person name="Cronin L.A."/>
            <person name="Shen M."/>
            <person name="Pai G."/>
            <person name="Van Aken S."/>
            <person name="Umayam L."/>
            <person name="Tallon L.J."/>
            <person name="Gill J.E."/>
            <person name="Adams M.D."/>
            <person name="Carrera A.J."/>
            <person name="Creasy T.H."/>
            <person name="Goodman H.M."/>
            <person name="Somerville C.R."/>
            <person name="Copenhaver G.P."/>
            <person name="Preuss D."/>
            <person name="Nierman W.C."/>
            <person name="White O."/>
            <person name="Eisen J.A."/>
            <person name="Salzberg S.L."/>
            <person name="Fraser C.M."/>
            <person name="Venter J.C."/>
        </authorList>
    </citation>
    <scope>NUCLEOTIDE SEQUENCE [LARGE SCALE GENOMIC DNA]</scope>
    <source>
        <strain>cv. Columbia</strain>
    </source>
</reference>
<reference key="2">
    <citation type="journal article" date="2017" name="Plant J.">
        <title>Araport11: a complete reannotation of the Arabidopsis thaliana reference genome.</title>
        <authorList>
            <person name="Cheng C.Y."/>
            <person name="Krishnakumar V."/>
            <person name="Chan A.P."/>
            <person name="Thibaud-Nissen F."/>
            <person name="Schobel S."/>
            <person name="Town C.D."/>
        </authorList>
    </citation>
    <scope>GENOME REANNOTATION</scope>
    <source>
        <strain>cv. Columbia</strain>
    </source>
</reference>
<reference key="3">
    <citation type="journal article" date="2002" name="Plant Cell">
        <title>TRANSPARENT TESTA GLABRA2, a trichome and seed coat development gene of Arabidopsis, encodes a WRKY transcription factor.</title>
        <authorList>
            <person name="Johnson C.S."/>
            <person name="Kolevski B."/>
            <person name="Smyth D.R."/>
        </authorList>
    </citation>
    <scope>NUCLEOTIDE SEQUENCE [GENOMIC DNA / MRNA] OF 45-429</scope>
    <scope>CONCEPTUAL TRANSLATION OF 1-44</scope>
    <scope>FUNCTION</scope>
    <scope>INDUCTION</scope>
    <scope>MUTANT TTG2-2</scope>
    <source>
        <strain>cv. Landsberg erecta</strain>
        <tissue>Root</tissue>
    </source>
</reference>
<reference key="4">
    <citation type="submission" date="2001-08" db="EMBL/GenBank/DDBJ databases">
        <authorList>
            <person name="Ulker B."/>
            <person name="Kushnir S."/>
            <person name="Somssich I.E."/>
        </authorList>
    </citation>
    <scope>NUCLEOTIDE SEQUENCE [MRNA] OF 81-429</scope>
    <source>
        <strain>cv. Columbia</strain>
        <tissue>Flower</tissue>
    </source>
</reference>
<gene>
    <name type="primary">WRKY44</name>
    <name type="synonym">TTG2</name>
    <name type="ordered locus">At2g37260</name>
    <name type="ORF">F3G5.5</name>
</gene>
<protein>
    <recommendedName>
        <fullName>WRKY transcription factor 44</fullName>
    </recommendedName>
    <alternativeName>
        <fullName>Protein TRANSPARENT TESTA GLABRA 2</fullName>
    </alternativeName>
    <alternativeName>
        <fullName>WRKY DNA-binding protein 44</fullName>
    </alternativeName>
</protein>
<accession>Q9ZUU0</accession>
<comment type="function">
    <text evidence="4">Transcription factor. Interacts specifically with the W box (5'-(T)TGAC[CT]-3'), a frequently occurring elicitor-responsive cis-acting element. Regulates trichome development, production of mucilage and tannin in seed coats, and maybe root hair development.</text>
</comment>
<comment type="subcellular location">
    <subcellularLocation>
        <location evidence="1">Nucleus</location>
    </subcellularLocation>
</comment>
<comment type="alternative products">
    <event type="alternative splicing"/>
    <isoform>
        <id>Q9ZUU0-1</id>
        <name>1</name>
        <sequence type="displayed"/>
    </isoform>
    <text>A number of isoforms are produced. According to EST sequences.</text>
</comment>
<comment type="tissue specificity">
    <text>Leaf promordia, trichomes, atrichoblasts, fertilized eggs, seed coat.</text>
</comment>
<comment type="induction">
    <text evidence="4">Not induced by salicylic acid or wounding.</text>
</comment>
<comment type="similarity">
    <text evidence="5">Belongs to the WRKY group I family.</text>
</comment>
<comment type="sequence caution" evidence="5">
    <conflict type="erroneous gene model prediction">
        <sequence resource="EMBL-CDS" id="AAC98047"/>
    </conflict>
</comment>
<organism>
    <name type="scientific">Arabidopsis thaliana</name>
    <name type="common">Mouse-ear cress</name>
    <dbReference type="NCBI Taxonomy" id="3702"/>
    <lineage>
        <taxon>Eukaryota</taxon>
        <taxon>Viridiplantae</taxon>
        <taxon>Streptophyta</taxon>
        <taxon>Embryophyta</taxon>
        <taxon>Tracheophyta</taxon>
        <taxon>Spermatophyta</taxon>
        <taxon>Magnoliopsida</taxon>
        <taxon>eudicotyledons</taxon>
        <taxon>Gunneridae</taxon>
        <taxon>Pentapetalae</taxon>
        <taxon>rosids</taxon>
        <taxon>malvids</taxon>
        <taxon>Brassicales</taxon>
        <taxon>Brassicaceae</taxon>
        <taxon>Camelineae</taxon>
        <taxon>Arabidopsis</taxon>
    </lineage>
</organism>
<dbReference type="EMBL" id="AC005896">
    <property type="protein sequence ID" value="AAC98047.1"/>
    <property type="status" value="ALT_SEQ"/>
    <property type="molecule type" value="Genomic_DNA"/>
</dbReference>
<dbReference type="EMBL" id="CP002685">
    <property type="protein sequence ID" value="AEC09373.1"/>
    <property type="molecule type" value="Genomic_DNA"/>
</dbReference>
<dbReference type="EMBL" id="AF516172">
    <property type="protein sequence ID" value="AAM61951.1"/>
    <property type="molecule type" value="mRNA"/>
</dbReference>
<dbReference type="EMBL" id="AF404862">
    <property type="protein sequence ID" value="AAK96200.1"/>
    <property type="molecule type" value="mRNA"/>
</dbReference>
<dbReference type="PIR" id="E84790">
    <property type="entry name" value="E84790"/>
</dbReference>
<dbReference type="RefSeq" id="NP_001323504.1">
    <property type="nucleotide sequence ID" value="NM_001336644.1"/>
</dbReference>
<dbReference type="RefSeq" id="NP_181263.2">
    <molecule id="Q9ZUU0-1"/>
    <property type="nucleotide sequence ID" value="NM_129282.4"/>
</dbReference>
<dbReference type="SMR" id="Q9ZUU0"/>
<dbReference type="BioGRID" id="3647">
    <property type="interactions" value="7"/>
</dbReference>
<dbReference type="FunCoup" id="Q9ZUU0">
    <property type="interactions" value="18"/>
</dbReference>
<dbReference type="IntAct" id="Q9ZUU0">
    <property type="interactions" value="3"/>
</dbReference>
<dbReference type="STRING" id="3702.Q9ZUU0"/>
<dbReference type="PaxDb" id="3702-AT2G37260.1"/>
<dbReference type="ProteomicsDB" id="234414">
    <molecule id="Q9ZUU0-1"/>
</dbReference>
<dbReference type="EnsemblPlants" id="AT2G37260.1">
    <molecule id="Q9ZUU0-1"/>
    <property type="protein sequence ID" value="AT2G37260.1"/>
    <property type="gene ID" value="AT2G37260"/>
</dbReference>
<dbReference type="GeneID" id="818303"/>
<dbReference type="Gramene" id="AT2G37260.1">
    <molecule id="Q9ZUU0-1"/>
    <property type="protein sequence ID" value="AT2G37260.1"/>
    <property type="gene ID" value="AT2G37260"/>
</dbReference>
<dbReference type="KEGG" id="ath:AT2G37260"/>
<dbReference type="Araport" id="AT2G37260"/>
<dbReference type="TAIR" id="AT2G37260">
    <property type="gene designation" value="TTG2"/>
</dbReference>
<dbReference type="eggNOG" id="ENOG502QS6E">
    <property type="taxonomic scope" value="Eukaryota"/>
</dbReference>
<dbReference type="InParanoid" id="Q9ZUU0"/>
<dbReference type="OrthoDB" id="783645at2759"/>
<dbReference type="PhylomeDB" id="Q9ZUU0"/>
<dbReference type="PRO" id="PR:Q9ZUU0"/>
<dbReference type="Proteomes" id="UP000006548">
    <property type="component" value="Chromosome 2"/>
</dbReference>
<dbReference type="ExpressionAtlas" id="Q9ZUU0">
    <property type="expression patterns" value="baseline and differential"/>
</dbReference>
<dbReference type="GO" id="GO:0005634">
    <property type="term" value="C:nucleus"/>
    <property type="evidence" value="ECO:0007669"/>
    <property type="project" value="UniProtKB-SubCell"/>
</dbReference>
<dbReference type="GO" id="GO:0003700">
    <property type="term" value="F:DNA-binding transcription factor activity"/>
    <property type="evidence" value="ECO:0000250"/>
    <property type="project" value="TAIR"/>
</dbReference>
<dbReference type="GO" id="GO:0046872">
    <property type="term" value="F:metal ion binding"/>
    <property type="evidence" value="ECO:0007669"/>
    <property type="project" value="UniProtKB-KW"/>
</dbReference>
<dbReference type="GO" id="GO:0043565">
    <property type="term" value="F:sequence-specific DNA binding"/>
    <property type="evidence" value="ECO:0007669"/>
    <property type="project" value="InterPro"/>
</dbReference>
<dbReference type="GO" id="GO:0009957">
    <property type="term" value="P:epidermal cell fate specification"/>
    <property type="evidence" value="ECO:0000315"/>
    <property type="project" value="TAIR"/>
</dbReference>
<dbReference type="GO" id="GO:0010214">
    <property type="term" value="P:seed coat development"/>
    <property type="evidence" value="ECO:0000315"/>
    <property type="project" value="TAIR"/>
</dbReference>
<dbReference type="FunFam" id="2.20.25.80:FF:000006">
    <property type="entry name" value="WRKY transcription factor"/>
    <property type="match status" value="2"/>
</dbReference>
<dbReference type="Gene3D" id="2.20.25.80">
    <property type="entry name" value="WRKY domain"/>
    <property type="match status" value="2"/>
</dbReference>
<dbReference type="InterPro" id="IPR003657">
    <property type="entry name" value="WRKY_dom"/>
</dbReference>
<dbReference type="InterPro" id="IPR036576">
    <property type="entry name" value="WRKY_dom_sf"/>
</dbReference>
<dbReference type="InterPro" id="IPR044810">
    <property type="entry name" value="WRKY_plant"/>
</dbReference>
<dbReference type="PANTHER" id="PTHR31221:SF90">
    <property type="entry name" value="WRKY TRANSCRIPTION FACTOR 44"/>
    <property type="match status" value="1"/>
</dbReference>
<dbReference type="PANTHER" id="PTHR31221">
    <property type="entry name" value="WRKY TRANSCRIPTION FACTOR PROTEIN 1-RELATED"/>
    <property type="match status" value="1"/>
</dbReference>
<dbReference type="Pfam" id="PF03106">
    <property type="entry name" value="WRKY"/>
    <property type="match status" value="2"/>
</dbReference>
<dbReference type="SMART" id="SM00774">
    <property type="entry name" value="WRKY"/>
    <property type="match status" value="2"/>
</dbReference>
<dbReference type="SUPFAM" id="SSF118290">
    <property type="entry name" value="WRKY DNA-binding domain"/>
    <property type="match status" value="2"/>
</dbReference>
<dbReference type="PROSITE" id="PS50811">
    <property type="entry name" value="WRKY"/>
    <property type="match status" value="2"/>
</dbReference>
<proteinExistence type="evidence at protein level"/>
<name>WRK44_ARATH</name>
<sequence length="429" mass="47141">MEVNDGERVVIAKPVASRPSSSSGFRTFTELLTDSVTVSPQTTCHEIVDAAIRPKTLRFNQPVAASVSCPRAEVKGIGNGMSCDDDSDSRNYVVYKPKAKLVSKATVSALANMLQGNRQQTWRQSEAVSYGKSVSQGTHRAGPNLVQKVPSFTESETSTGDRSSVDGYNWRKYGQKQVKGSECPRSYYKCTHPKCPVKKKVERSVEGQVSEIVYQGEHNHSKPSCPLPRRASSSISSGFQKPPKSIASEGSMGQDPNNNLYSPLWNNQSNDSTQNRTEKMSEGCVITPFEFAVPRSTNSNPGTSDSGCKSSQCDEGELDDPSRSKRRKNEKQSSEAGVSQGSVESDSLEDGFRWRKYGQKVVGGNAYPRSYYRCTSANCRARKHVERASDDPRAFITTYEGKHNHHLLLSPPSSSTLPFNSPQLSKQTI</sequence>